<protein>
    <recommendedName>
        <fullName>Single-pass membrane and coiled-coil domain-containing protein 4 homolog</fullName>
    </recommendedName>
</protein>
<proteinExistence type="inferred from homology"/>
<organism>
    <name type="scientific">Aedes aegypti</name>
    <name type="common">Yellowfever mosquito</name>
    <name type="synonym">Culex aegypti</name>
    <dbReference type="NCBI Taxonomy" id="7159"/>
    <lineage>
        <taxon>Eukaryota</taxon>
        <taxon>Metazoa</taxon>
        <taxon>Ecdysozoa</taxon>
        <taxon>Arthropoda</taxon>
        <taxon>Hexapoda</taxon>
        <taxon>Insecta</taxon>
        <taxon>Pterygota</taxon>
        <taxon>Neoptera</taxon>
        <taxon>Endopterygota</taxon>
        <taxon>Diptera</taxon>
        <taxon>Nematocera</taxon>
        <taxon>Culicoidea</taxon>
        <taxon>Culicidae</taxon>
        <taxon>Culicinae</taxon>
        <taxon>Aedini</taxon>
        <taxon>Aedes</taxon>
        <taxon>Stegomyia</taxon>
    </lineage>
</organism>
<gene>
    <name type="ORF">AAEL005900</name>
</gene>
<dbReference type="EMBL" id="CH477364">
    <property type="protein sequence ID" value="EAT42585.1"/>
    <property type="molecule type" value="Genomic_DNA"/>
</dbReference>
<dbReference type="SMR" id="Q0IFA9"/>
<dbReference type="FunCoup" id="Q0IFA9">
    <property type="interactions" value="1"/>
</dbReference>
<dbReference type="PaxDb" id="7159-AAEL005900-PA"/>
<dbReference type="EnsemblMetazoa" id="AAEL005900-RA">
    <property type="protein sequence ID" value="AAEL005900-PA"/>
    <property type="gene ID" value="AAEL005900"/>
</dbReference>
<dbReference type="EnsemblMetazoa" id="AAEL005900-RB">
    <property type="protein sequence ID" value="AAEL005900-PB"/>
    <property type="gene ID" value="AAEL005900"/>
</dbReference>
<dbReference type="GeneID" id="5567161"/>
<dbReference type="KEGG" id="aag:5567161"/>
<dbReference type="VEuPathDB" id="VectorBase:AAEL005900"/>
<dbReference type="eggNOG" id="ENOG502S7F4">
    <property type="taxonomic scope" value="Eukaryota"/>
</dbReference>
<dbReference type="HOGENOM" id="CLU_209950_1_0_1"/>
<dbReference type="InParanoid" id="Q0IFA9"/>
<dbReference type="OMA" id="FFIYANT"/>
<dbReference type="OrthoDB" id="10266771at2759"/>
<dbReference type="PhylomeDB" id="Q0IFA9"/>
<dbReference type="Proteomes" id="UP000008820">
    <property type="component" value="Chromosome 3"/>
</dbReference>
<dbReference type="Proteomes" id="UP000682892">
    <property type="component" value="Chromosome 3"/>
</dbReference>
<dbReference type="GO" id="GO:0016020">
    <property type="term" value="C:membrane"/>
    <property type="evidence" value="ECO:0007669"/>
    <property type="project" value="UniProtKB-SubCell"/>
</dbReference>
<dbReference type="InterPro" id="IPR027960">
    <property type="entry name" value="DUF4519"/>
</dbReference>
<dbReference type="PANTHER" id="PTHR34644">
    <property type="entry name" value="SINGLE-PASS MEMBRANE AND COILED-COIL DOMAIN-CONTAINING PROTEIN 4"/>
    <property type="match status" value="1"/>
</dbReference>
<dbReference type="PANTHER" id="PTHR34644:SF2">
    <property type="entry name" value="SINGLE-PASS MEMBRANE AND COILED-COIL DOMAIN-CONTAINING PROTEIN 4"/>
    <property type="match status" value="1"/>
</dbReference>
<dbReference type="Pfam" id="PF15012">
    <property type="entry name" value="DUF4519"/>
    <property type="match status" value="1"/>
</dbReference>
<name>SMCO4_AEDAE</name>
<sequence length="60" mass="7250">MRKLRGGQTKETRKQKQERREENLKIQQQLKTIVLPICGVFLMCIVVYVFLKTRPRFEEL</sequence>
<reference key="1">
    <citation type="journal article" date="2007" name="Science">
        <title>Genome sequence of Aedes aegypti, a major arbovirus vector.</title>
        <authorList>
            <person name="Nene V."/>
            <person name="Wortman J.R."/>
            <person name="Lawson D."/>
            <person name="Haas B.J."/>
            <person name="Kodira C.D."/>
            <person name="Tu Z.J."/>
            <person name="Loftus B.J."/>
            <person name="Xi Z."/>
            <person name="Megy K."/>
            <person name="Grabherr M."/>
            <person name="Ren Q."/>
            <person name="Zdobnov E.M."/>
            <person name="Lobo N.F."/>
            <person name="Campbell K.S."/>
            <person name="Brown S.E."/>
            <person name="Bonaldo M.F."/>
            <person name="Zhu J."/>
            <person name="Sinkins S.P."/>
            <person name="Hogenkamp D.G."/>
            <person name="Amedeo P."/>
            <person name="Arensburger P."/>
            <person name="Atkinson P.W."/>
            <person name="Bidwell S.L."/>
            <person name="Biedler J."/>
            <person name="Birney E."/>
            <person name="Bruggner R.V."/>
            <person name="Costas J."/>
            <person name="Coy M.R."/>
            <person name="Crabtree J."/>
            <person name="Crawford M."/>
            <person name="DeBruyn B."/>
            <person name="DeCaprio D."/>
            <person name="Eiglmeier K."/>
            <person name="Eisenstadt E."/>
            <person name="El-Dorry H."/>
            <person name="Gelbart W.M."/>
            <person name="Gomes S.L."/>
            <person name="Hammond M."/>
            <person name="Hannick L.I."/>
            <person name="Hogan J.R."/>
            <person name="Holmes M.H."/>
            <person name="Jaffe D."/>
            <person name="Johnston S.J."/>
            <person name="Kennedy R.C."/>
            <person name="Koo H."/>
            <person name="Kravitz S."/>
            <person name="Kriventseva E.V."/>
            <person name="Kulp D."/>
            <person name="Labutti K."/>
            <person name="Lee E."/>
            <person name="Li S."/>
            <person name="Lovin D.D."/>
            <person name="Mao C."/>
            <person name="Mauceli E."/>
            <person name="Menck C.F."/>
            <person name="Miller J.R."/>
            <person name="Montgomery P."/>
            <person name="Mori A."/>
            <person name="Nascimento A.L."/>
            <person name="Naveira H.F."/>
            <person name="Nusbaum C."/>
            <person name="O'Leary S.B."/>
            <person name="Orvis J."/>
            <person name="Pertea M."/>
            <person name="Quesneville H."/>
            <person name="Reidenbach K.R."/>
            <person name="Rogers Y.-H.C."/>
            <person name="Roth C.W."/>
            <person name="Schneider J.R."/>
            <person name="Schatz M."/>
            <person name="Shumway M."/>
            <person name="Stanke M."/>
            <person name="Stinson E.O."/>
            <person name="Tubio J.M.C."/>
            <person name="Vanzee J.P."/>
            <person name="Verjovski-Almeida S."/>
            <person name="Werner D."/>
            <person name="White O.R."/>
            <person name="Wyder S."/>
            <person name="Zeng Q."/>
            <person name="Zhao Q."/>
            <person name="Zhao Y."/>
            <person name="Hill C.A."/>
            <person name="Raikhel A.S."/>
            <person name="Soares M.B."/>
            <person name="Knudson D.L."/>
            <person name="Lee N.H."/>
            <person name="Galagan J."/>
            <person name="Salzberg S.L."/>
            <person name="Paulsen I.T."/>
            <person name="Dimopoulos G."/>
            <person name="Collins F.H."/>
            <person name="Bruce B."/>
            <person name="Fraser-Liggett C.M."/>
            <person name="Severson D.W."/>
        </authorList>
    </citation>
    <scope>NUCLEOTIDE SEQUENCE [LARGE SCALE GENOMIC DNA]</scope>
    <source>
        <strain>LVPib12</strain>
    </source>
</reference>
<evidence type="ECO:0000255" key="1"/>
<evidence type="ECO:0000256" key="2">
    <source>
        <dbReference type="SAM" id="MobiDB-lite"/>
    </source>
</evidence>
<evidence type="ECO:0000305" key="3"/>
<comment type="subcellular location">
    <subcellularLocation>
        <location evidence="3">Membrane</location>
        <topology evidence="3">Single-pass membrane protein</topology>
    </subcellularLocation>
</comment>
<comment type="similarity">
    <text evidence="3">Belongs to the SMCO4 family.</text>
</comment>
<feature type="chain" id="PRO_0000365551" description="Single-pass membrane and coiled-coil domain-containing protein 4 homolog">
    <location>
        <begin position="1"/>
        <end position="60"/>
    </location>
</feature>
<feature type="transmembrane region" description="Helical" evidence="1">
    <location>
        <begin position="32"/>
        <end position="52"/>
    </location>
</feature>
<feature type="region of interest" description="Disordered" evidence="2">
    <location>
        <begin position="1"/>
        <end position="21"/>
    </location>
</feature>
<feature type="coiled-coil region" evidence="1">
    <location>
        <begin position="10"/>
        <end position="33"/>
    </location>
</feature>
<feature type="compositionally biased region" description="Basic and acidic residues" evidence="2">
    <location>
        <begin position="8"/>
        <end position="21"/>
    </location>
</feature>
<keyword id="KW-0175">Coiled coil</keyword>
<keyword id="KW-0472">Membrane</keyword>
<keyword id="KW-1185">Reference proteome</keyword>
<keyword id="KW-0812">Transmembrane</keyword>
<keyword id="KW-1133">Transmembrane helix</keyword>
<accession>Q0IFA9</accession>